<organism>
    <name type="scientific">Synechococcus elongatus (strain ATCC 33912 / PCC 7942 / FACHB-805)</name>
    <name type="common">Anacystis nidulans R2</name>
    <dbReference type="NCBI Taxonomy" id="1140"/>
    <lineage>
        <taxon>Bacteria</taxon>
        <taxon>Bacillati</taxon>
        <taxon>Cyanobacteriota</taxon>
        <taxon>Cyanophyceae</taxon>
        <taxon>Synechococcales</taxon>
        <taxon>Synechococcaceae</taxon>
        <taxon>Synechococcus</taxon>
    </lineage>
</organism>
<evidence type="ECO:0000255" key="1">
    <source>
        <dbReference type="HAMAP-Rule" id="MF_00633"/>
    </source>
</evidence>
<accession>Q54711</accession>
<accession>Q31KQ8</accession>
<keyword id="KW-0249">Electron transport</keyword>
<keyword id="KW-0349">Heme</keyword>
<keyword id="KW-0408">Iron</keyword>
<keyword id="KW-0472">Membrane</keyword>
<keyword id="KW-0479">Metal-binding</keyword>
<keyword id="KW-0602">Photosynthesis</keyword>
<keyword id="KW-1185">Reference proteome</keyword>
<keyword id="KW-0793">Thylakoid</keyword>
<keyword id="KW-0812">Transmembrane</keyword>
<keyword id="KW-1133">Transmembrane helix</keyword>
<keyword id="KW-0813">Transport</keyword>
<protein>
    <recommendedName>
        <fullName evidence="1">Cytochrome b6</fullName>
    </recommendedName>
</protein>
<comment type="function">
    <text evidence="1">Component of the cytochrome b6-f complex, which mediates electron transfer between photosystem II (PSII) and photosystem I (PSI), cyclic electron flow around PSI, and state transitions.</text>
</comment>
<comment type="cofactor">
    <cofactor evidence="1">
        <name>heme b</name>
        <dbReference type="ChEBI" id="CHEBI:60344"/>
    </cofactor>
    <text evidence="1">Binds 2 heme b groups non-covalently with two histidine residues as axial ligands.</text>
</comment>
<comment type="cofactor">
    <cofactor evidence="1">
        <name>heme c</name>
        <dbReference type="ChEBI" id="CHEBI:61717"/>
    </cofactor>
    <text evidence="1">Binds one heme group covalently by a single cysteine link with no axial amino acid ligand. This heme was named heme ci.</text>
</comment>
<comment type="subunit">
    <text evidence="1">The 4 large subunits of the cytochrome b6-f complex are cytochrome b6, subunit IV (17 kDa polypeptide, PetD), cytochrome f and the Rieske protein, while the 4 small subunits are PetG, PetL, PetM and PetN. The complex functions as a dimer.</text>
</comment>
<comment type="subcellular location">
    <subcellularLocation>
        <location evidence="1">Cellular thylakoid membrane</location>
        <topology evidence="1">Multi-pass membrane protein</topology>
    </subcellularLocation>
</comment>
<comment type="miscellaneous">
    <text evidence="1">Heme 1 (or BH or b566) is high-potential and absorbs at about 566 nm, and heme 2 (or BL or b562) is low-potential and absorbs at about 562 nm.</text>
</comment>
<comment type="similarity">
    <text evidence="1">Belongs to the cytochrome b family. PetB subfamily.</text>
</comment>
<dbReference type="EMBL" id="U33285">
    <property type="protein sequence ID" value="AAA98850.1"/>
    <property type="molecule type" value="Genomic_DNA"/>
</dbReference>
<dbReference type="EMBL" id="CP000100">
    <property type="protein sequence ID" value="ABB58361.1"/>
    <property type="molecule type" value="Genomic_DNA"/>
</dbReference>
<dbReference type="RefSeq" id="WP_011244081.1">
    <property type="nucleotide sequence ID" value="NZ_JACJTX010000001.1"/>
</dbReference>
<dbReference type="SMR" id="Q54711"/>
<dbReference type="STRING" id="1140.Synpcc7942_2331"/>
<dbReference type="TCDB" id="3.D.3.5.3">
    <property type="family name" value="the proton-translocating quinol:cytochrome c reductase (qcr) superfamily"/>
</dbReference>
<dbReference type="PaxDb" id="1140-Synpcc7942_2331"/>
<dbReference type="KEGG" id="syf:Synpcc7942_2331"/>
<dbReference type="eggNOG" id="COG1290">
    <property type="taxonomic scope" value="Bacteria"/>
</dbReference>
<dbReference type="HOGENOM" id="CLU_031114_0_2_3"/>
<dbReference type="OrthoDB" id="9804503at2"/>
<dbReference type="BioCyc" id="MetaCyc:SYNPCC7942_2331-MONOMER"/>
<dbReference type="BioCyc" id="SYNEL:SYNPCC7942_2331-MONOMER"/>
<dbReference type="Proteomes" id="UP000889800">
    <property type="component" value="Chromosome"/>
</dbReference>
<dbReference type="GO" id="GO:0031676">
    <property type="term" value="C:plasma membrane-derived thylakoid membrane"/>
    <property type="evidence" value="ECO:0007669"/>
    <property type="project" value="UniProtKB-SubCell"/>
</dbReference>
<dbReference type="GO" id="GO:0045158">
    <property type="term" value="F:electron transporter, transferring electrons within cytochrome b6/f complex of photosystem II activity"/>
    <property type="evidence" value="ECO:0007669"/>
    <property type="project" value="UniProtKB-UniRule"/>
</dbReference>
<dbReference type="GO" id="GO:0046872">
    <property type="term" value="F:metal ion binding"/>
    <property type="evidence" value="ECO:0007669"/>
    <property type="project" value="UniProtKB-KW"/>
</dbReference>
<dbReference type="GO" id="GO:0016491">
    <property type="term" value="F:oxidoreductase activity"/>
    <property type="evidence" value="ECO:0007669"/>
    <property type="project" value="InterPro"/>
</dbReference>
<dbReference type="GO" id="GO:0015979">
    <property type="term" value="P:photosynthesis"/>
    <property type="evidence" value="ECO:0007669"/>
    <property type="project" value="UniProtKB-UniRule"/>
</dbReference>
<dbReference type="GO" id="GO:0022904">
    <property type="term" value="P:respiratory electron transport chain"/>
    <property type="evidence" value="ECO:0007669"/>
    <property type="project" value="InterPro"/>
</dbReference>
<dbReference type="CDD" id="cd00284">
    <property type="entry name" value="Cytochrome_b_N"/>
    <property type="match status" value="1"/>
</dbReference>
<dbReference type="FunFam" id="1.20.810.10:FF:000001">
    <property type="entry name" value="Cytochrome b6"/>
    <property type="match status" value="1"/>
</dbReference>
<dbReference type="Gene3D" id="1.20.810.10">
    <property type="entry name" value="Cytochrome Bc1 Complex, Chain C"/>
    <property type="match status" value="1"/>
</dbReference>
<dbReference type="HAMAP" id="MF_00633">
    <property type="entry name" value="Cytb6_f_cytb6"/>
    <property type="match status" value="1"/>
</dbReference>
<dbReference type="InterPro" id="IPR005797">
    <property type="entry name" value="Cyt_b/b6_N"/>
</dbReference>
<dbReference type="InterPro" id="IPR023530">
    <property type="entry name" value="Cyt_B6_PetB"/>
</dbReference>
<dbReference type="InterPro" id="IPR027387">
    <property type="entry name" value="Cytb/b6-like_sf"/>
</dbReference>
<dbReference type="InterPro" id="IPR048259">
    <property type="entry name" value="Cytochrome_b_N_euk/bac"/>
</dbReference>
<dbReference type="InterPro" id="IPR016174">
    <property type="entry name" value="Di-haem_cyt_TM"/>
</dbReference>
<dbReference type="NCBIfam" id="NF002990">
    <property type="entry name" value="PRK03735.1"/>
    <property type="match status" value="1"/>
</dbReference>
<dbReference type="PANTHER" id="PTHR19271">
    <property type="entry name" value="CYTOCHROME B"/>
    <property type="match status" value="1"/>
</dbReference>
<dbReference type="PANTHER" id="PTHR19271:SF16">
    <property type="entry name" value="CYTOCHROME B"/>
    <property type="match status" value="1"/>
</dbReference>
<dbReference type="Pfam" id="PF00033">
    <property type="entry name" value="Cytochrome_B"/>
    <property type="match status" value="1"/>
</dbReference>
<dbReference type="PIRSF" id="PIRSF000032">
    <property type="entry name" value="Cytochrome_b6"/>
    <property type="match status" value="1"/>
</dbReference>
<dbReference type="SUPFAM" id="SSF81342">
    <property type="entry name" value="Transmembrane di-heme cytochromes"/>
    <property type="match status" value="1"/>
</dbReference>
<dbReference type="PROSITE" id="PS51002">
    <property type="entry name" value="CYTB_NTER"/>
    <property type="match status" value="1"/>
</dbReference>
<sequence length="215" mass="24357">MSKVYDWFEERLEIQAIAEDVSSKYVPPHVNIFYCLGGITLTCFLIQFATGFAMTFYYKPTVAEAYSSVQFIMNQVNFGWLIRSIHRWSASMMVLMMILHVFRVYLTGGFKRPRELTWVTGVVMAVITVTFGVTGYSLPWDQVGYWAVKIVSGVPEAIPVVGSAMVELLRGGQSVGQATLTRFYSLHTFVLPWLIAVFMLLHFLMIRKQGISGPL</sequence>
<feature type="chain" id="PRO_0000061836" description="Cytochrome b6">
    <location>
        <begin position="1"/>
        <end position="215"/>
    </location>
</feature>
<feature type="transmembrane region" description="Helical" evidence="1">
    <location>
        <begin position="32"/>
        <end position="52"/>
    </location>
</feature>
<feature type="transmembrane region" description="Helical" evidence="1">
    <location>
        <begin position="90"/>
        <end position="110"/>
    </location>
</feature>
<feature type="transmembrane region" description="Helical" evidence="1">
    <location>
        <begin position="116"/>
        <end position="136"/>
    </location>
</feature>
<feature type="transmembrane region" description="Helical" evidence="1">
    <location>
        <begin position="186"/>
        <end position="206"/>
    </location>
</feature>
<feature type="binding site" description="covalent" evidence="1">
    <location>
        <position position="35"/>
    </location>
    <ligand>
        <name>heme c</name>
        <dbReference type="ChEBI" id="CHEBI:61717"/>
    </ligand>
</feature>
<feature type="binding site" description="axial binding residue" evidence="1">
    <location>
        <position position="86"/>
    </location>
    <ligand>
        <name>heme b</name>
        <dbReference type="ChEBI" id="CHEBI:60344"/>
        <label>2</label>
    </ligand>
    <ligandPart>
        <name>Fe</name>
        <dbReference type="ChEBI" id="CHEBI:18248"/>
    </ligandPart>
</feature>
<feature type="binding site" description="axial binding residue" evidence="1">
    <location>
        <position position="100"/>
    </location>
    <ligand>
        <name>heme b</name>
        <dbReference type="ChEBI" id="CHEBI:60344"/>
        <label>1</label>
    </ligand>
    <ligandPart>
        <name>Fe</name>
        <dbReference type="ChEBI" id="CHEBI:18248"/>
    </ligandPart>
</feature>
<feature type="binding site" description="axial binding residue" evidence="1">
    <location>
        <position position="187"/>
    </location>
    <ligand>
        <name>heme b</name>
        <dbReference type="ChEBI" id="CHEBI:60344"/>
        <label>2</label>
    </ligand>
    <ligandPart>
        <name>Fe</name>
        <dbReference type="ChEBI" id="CHEBI:18248"/>
    </ligandPart>
</feature>
<feature type="binding site" description="axial binding residue" evidence="1">
    <location>
        <position position="202"/>
    </location>
    <ligand>
        <name>heme b</name>
        <dbReference type="ChEBI" id="CHEBI:60344"/>
        <label>1</label>
    </ligand>
    <ligandPart>
        <name>Fe</name>
        <dbReference type="ChEBI" id="CHEBI:18248"/>
    </ligandPart>
</feature>
<gene>
    <name evidence="1" type="primary">petB</name>
    <name type="ordered locus">Synpcc7942_2331</name>
</gene>
<proteinExistence type="inferred from homology"/>
<name>CYB6_SYNE7</name>
<reference key="1">
    <citation type="journal article" date="1995" name="FEMS Microbiol. Lett.">
        <title>A comparison of gene organization in the zwf region of the genomes of the cyanobacteria Synechococcus sp. PCC 7942 and Anabaena sp. PCC 7120.</title>
        <authorList>
            <person name="Newman J."/>
            <person name="Karakaya H."/>
            <person name="Scanlan D.J."/>
            <person name="Mann N.H."/>
        </authorList>
    </citation>
    <scope>NUCLEOTIDE SEQUENCE [GENOMIC DNA]</scope>
</reference>
<reference key="2">
    <citation type="submission" date="2005-08" db="EMBL/GenBank/DDBJ databases">
        <title>Complete sequence of chromosome 1 of Synechococcus elongatus PCC 7942.</title>
        <authorList>
            <consortium name="US DOE Joint Genome Institute"/>
            <person name="Copeland A."/>
            <person name="Lucas S."/>
            <person name="Lapidus A."/>
            <person name="Barry K."/>
            <person name="Detter J.C."/>
            <person name="Glavina T."/>
            <person name="Hammon N."/>
            <person name="Israni S."/>
            <person name="Pitluck S."/>
            <person name="Schmutz J."/>
            <person name="Larimer F."/>
            <person name="Land M."/>
            <person name="Kyrpides N."/>
            <person name="Lykidis A."/>
            <person name="Golden S."/>
            <person name="Richardson P."/>
        </authorList>
    </citation>
    <scope>NUCLEOTIDE SEQUENCE [LARGE SCALE GENOMIC DNA]</scope>
    <source>
        <strain>ATCC 33912 / PCC 7942 / FACHB-805</strain>
    </source>
</reference>